<dbReference type="EC" id="6.5.1.1" evidence="1"/>
<dbReference type="EMBL" id="AE010299">
    <property type="protein sequence ID" value="AAM04168.1"/>
    <property type="molecule type" value="Genomic_DNA"/>
</dbReference>
<dbReference type="RefSeq" id="WP_011020773.1">
    <property type="nucleotide sequence ID" value="NC_003552.1"/>
</dbReference>
<dbReference type="SMR" id="Q8TSR7"/>
<dbReference type="STRING" id="188937.MA_0728"/>
<dbReference type="EnsemblBacteria" id="AAM04168">
    <property type="protein sequence ID" value="AAM04168"/>
    <property type="gene ID" value="MA_0728"/>
</dbReference>
<dbReference type="GeneID" id="1472620"/>
<dbReference type="KEGG" id="mac:MA_0728"/>
<dbReference type="HOGENOM" id="CLU_005138_6_0_2"/>
<dbReference type="InParanoid" id="Q8TSR7"/>
<dbReference type="OrthoDB" id="31274at2157"/>
<dbReference type="PhylomeDB" id="Q8TSR7"/>
<dbReference type="Proteomes" id="UP000002487">
    <property type="component" value="Chromosome"/>
</dbReference>
<dbReference type="GO" id="GO:0005524">
    <property type="term" value="F:ATP binding"/>
    <property type="evidence" value="ECO:0007669"/>
    <property type="project" value="UniProtKB-UniRule"/>
</dbReference>
<dbReference type="GO" id="GO:0003677">
    <property type="term" value="F:DNA binding"/>
    <property type="evidence" value="ECO:0007669"/>
    <property type="project" value="InterPro"/>
</dbReference>
<dbReference type="GO" id="GO:0003910">
    <property type="term" value="F:DNA ligase (ATP) activity"/>
    <property type="evidence" value="ECO:0000318"/>
    <property type="project" value="GO_Central"/>
</dbReference>
<dbReference type="GO" id="GO:0046872">
    <property type="term" value="F:metal ion binding"/>
    <property type="evidence" value="ECO:0007669"/>
    <property type="project" value="UniProtKB-KW"/>
</dbReference>
<dbReference type="GO" id="GO:0051301">
    <property type="term" value="P:cell division"/>
    <property type="evidence" value="ECO:0007669"/>
    <property type="project" value="UniProtKB-KW"/>
</dbReference>
<dbReference type="GO" id="GO:0071897">
    <property type="term" value="P:DNA biosynthetic process"/>
    <property type="evidence" value="ECO:0007669"/>
    <property type="project" value="InterPro"/>
</dbReference>
<dbReference type="GO" id="GO:0006310">
    <property type="term" value="P:DNA recombination"/>
    <property type="evidence" value="ECO:0007669"/>
    <property type="project" value="UniProtKB-UniRule"/>
</dbReference>
<dbReference type="GO" id="GO:0006281">
    <property type="term" value="P:DNA repair"/>
    <property type="evidence" value="ECO:0007669"/>
    <property type="project" value="UniProtKB-UniRule"/>
</dbReference>
<dbReference type="GO" id="GO:0006273">
    <property type="term" value="P:lagging strand elongation"/>
    <property type="evidence" value="ECO:0000318"/>
    <property type="project" value="GO_Central"/>
</dbReference>
<dbReference type="CDD" id="cd07901">
    <property type="entry name" value="Adenylation_DNA_ligase_Arch_LigB"/>
    <property type="match status" value="1"/>
</dbReference>
<dbReference type="CDD" id="cd07969">
    <property type="entry name" value="OBF_DNA_ligase_I"/>
    <property type="match status" value="1"/>
</dbReference>
<dbReference type="FunFam" id="1.10.3260.10:FF:000007">
    <property type="entry name" value="DNA ligase"/>
    <property type="match status" value="1"/>
</dbReference>
<dbReference type="FunFam" id="3.30.470.30:FF:000012">
    <property type="entry name" value="Probable DNA ligase"/>
    <property type="match status" value="1"/>
</dbReference>
<dbReference type="Gene3D" id="1.10.3260.10">
    <property type="entry name" value="DNA ligase, ATP-dependent, N-terminal domain"/>
    <property type="match status" value="1"/>
</dbReference>
<dbReference type="Gene3D" id="3.30.470.30">
    <property type="entry name" value="DNA ligase/mRNA capping enzyme"/>
    <property type="match status" value="1"/>
</dbReference>
<dbReference type="Gene3D" id="2.40.50.140">
    <property type="entry name" value="Nucleic acid-binding proteins"/>
    <property type="match status" value="1"/>
</dbReference>
<dbReference type="HAMAP" id="MF_00407">
    <property type="entry name" value="DNA_ligase"/>
    <property type="match status" value="1"/>
</dbReference>
<dbReference type="InterPro" id="IPR050191">
    <property type="entry name" value="ATP-dep_DNA_ligase"/>
</dbReference>
<dbReference type="InterPro" id="IPR022865">
    <property type="entry name" value="DNA_ligae_ATP-dep_bac/arc"/>
</dbReference>
<dbReference type="InterPro" id="IPR000977">
    <property type="entry name" value="DNA_ligase_ATP-dep"/>
</dbReference>
<dbReference type="InterPro" id="IPR012309">
    <property type="entry name" value="DNA_ligase_ATP-dep_C"/>
</dbReference>
<dbReference type="InterPro" id="IPR012310">
    <property type="entry name" value="DNA_ligase_ATP-dep_cent"/>
</dbReference>
<dbReference type="InterPro" id="IPR016059">
    <property type="entry name" value="DNA_ligase_ATP-dep_CS"/>
</dbReference>
<dbReference type="InterPro" id="IPR012308">
    <property type="entry name" value="DNA_ligase_ATP-dep_N"/>
</dbReference>
<dbReference type="InterPro" id="IPR036599">
    <property type="entry name" value="DNA_ligase_N_sf"/>
</dbReference>
<dbReference type="InterPro" id="IPR012340">
    <property type="entry name" value="NA-bd_OB-fold"/>
</dbReference>
<dbReference type="NCBIfam" id="TIGR00574">
    <property type="entry name" value="dnl1"/>
    <property type="match status" value="1"/>
</dbReference>
<dbReference type="PANTHER" id="PTHR45674:SF4">
    <property type="entry name" value="DNA LIGASE 1"/>
    <property type="match status" value="1"/>
</dbReference>
<dbReference type="PANTHER" id="PTHR45674">
    <property type="entry name" value="DNA LIGASE 1/3 FAMILY MEMBER"/>
    <property type="match status" value="1"/>
</dbReference>
<dbReference type="Pfam" id="PF04679">
    <property type="entry name" value="DNA_ligase_A_C"/>
    <property type="match status" value="1"/>
</dbReference>
<dbReference type="Pfam" id="PF01068">
    <property type="entry name" value="DNA_ligase_A_M"/>
    <property type="match status" value="1"/>
</dbReference>
<dbReference type="Pfam" id="PF04675">
    <property type="entry name" value="DNA_ligase_A_N"/>
    <property type="match status" value="1"/>
</dbReference>
<dbReference type="SUPFAM" id="SSF117018">
    <property type="entry name" value="ATP-dependent DNA ligase DNA-binding domain"/>
    <property type="match status" value="1"/>
</dbReference>
<dbReference type="SUPFAM" id="SSF56091">
    <property type="entry name" value="DNA ligase/mRNA capping enzyme, catalytic domain"/>
    <property type="match status" value="1"/>
</dbReference>
<dbReference type="SUPFAM" id="SSF50249">
    <property type="entry name" value="Nucleic acid-binding proteins"/>
    <property type="match status" value="1"/>
</dbReference>
<dbReference type="PROSITE" id="PS00697">
    <property type="entry name" value="DNA_LIGASE_A1"/>
    <property type="match status" value="1"/>
</dbReference>
<dbReference type="PROSITE" id="PS50160">
    <property type="entry name" value="DNA_LIGASE_A3"/>
    <property type="match status" value="1"/>
</dbReference>
<comment type="function">
    <text evidence="1">DNA ligase that seals nicks in double-stranded DNA during DNA replication, DNA recombination and DNA repair.</text>
</comment>
<comment type="catalytic activity">
    <reaction evidence="1">
        <text>ATP + (deoxyribonucleotide)n-3'-hydroxyl + 5'-phospho-(deoxyribonucleotide)m = (deoxyribonucleotide)n+m + AMP + diphosphate.</text>
        <dbReference type="EC" id="6.5.1.1"/>
    </reaction>
</comment>
<comment type="cofactor">
    <cofactor evidence="1">
        <name>Mg(2+)</name>
        <dbReference type="ChEBI" id="CHEBI:18420"/>
    </cofactor>
</comment>
<comment type="similarity">
    <text evidence="1">Belongs to the ATP-dependent DNA ligase family.</text>
</comment>
<proteinExistence type="inferred from homology"/>
<reference key="1">
    <citation type="journal article" date="2002" name="Genome Res.">
        <title>The genome of Methanosarcina acetivorans reveals extensive metabolic and physiological diversity.</title>
        <authorList>
            <person name="Galagan J.E."/>
            <person name="Nusbaum C."/>
            <person name="Roy A."/>
            <person name="Endrizzi M.G."/>
            <person name="Macdonald P."/>
            <person name="FitzHugh W."/>
            <person name="Calvo S."/>
            <person name="Engels R."/>
            <person name="Smirnov S."/>
            <person name="Atnoor D."/>
            <person name="Brown A."/>
            <person name="Allen N."/>
            <person name="Naylor J."/>
            <person name="Stange-Thomann N."/>
            <person name="DeArellano K."/>
            <person name="Johnson R."/>
            <person name="Linton L."/>
            <person name="McEwan P."/>
            <person name="McKernan K."/>
            <person name="Talamas J."/>
            <person name="Tirrell A."/>
            <person name="Ye W."/>
            <person name="Zimmer A."/>
            <person name="Barber R.D."/>
            <person name="Cann I."/>
            <person name="Graham D.E."/>
            <person name="Grahame D.A."/>
            <person name="Guss A.M."/>
            <person name="Hedderich R."/>
            <person name="Ingram-Smith C."/>
            <person name="Kuettner H.C."/>
            <person name="Krzycki J.A."/>
            <person name="Leigh J.A."/>
            <person name="Li W."/>
            <person name="Liu J."/>
            <person name="Mukhopadhyay B."/>
            <person name="Reeve J.N."/>
            <person name="Smith K."/>
            <person name="Springer T.A."/>
            <person name="Umayam L.A."/>
            <person name="White O."/>
            <person name="White R.H."/>
            <person name="de Macario E.C."/>
            <person name="Ferry J.G."/>
            <person name="Jarrell K.F."/>
            <person name="Jing H."/>
            <person name="Macario A.J.L."/>
            <person name="Paulsen I.T."/>
            <person name="Pritchett M."/>
            <person name="Sowers K.R."/>
            <person name="Swanson R.V."/>
            <person name="Zinder S.H."/>
            <person name="Lander E."/>
            <person name="Metcalf W.W."/>
            <person name="Birren B."/>
        </authorList>
    </citation>
    <scope>NUCLEOTIDE SEQUENCE [LARGE SCALE GENOMIC DNA]</scope>
    <source>
        <strain>ATCC 35395 / DSM 2834 / JCM 12185 / C2A</strain>
    </source>
</reference>
<sequence length="580" mass="65351">MVRFKELAELFEELERITSHKEIVRKLAGFFGGLKGDEVKDSAYLFLGSIGPAFENTTLGIKDRLVTRAIAGAYGVSEEEVKKRYARAGDLGDVAFELSKKREASLTIEEVFKRLRQIKEASGKGSQEKKTGLLSDILQKATPEEGKYIIRIVLGRLRLGFGDQFLLEAFSIAFTGDKKHAGKIKESYSVCTDIGELAQTLAEHGAGAPGYFSIKPGRPVKSMLAQRVESFEELEERIKGKKAAEEKYDGERVQIHKAGDEIKAFSRRLEDITAQYPDIIEAVRESISADTIVLDGEIVAYAELEKENTRIEEFYPFQNLMQRRRKYEVEKYREKCPVAVFFFDILYLNGESLLKKTYPERRALLEEHVNGSGIVHLTRRTVTENIEELEDFFNETVEKGLEGIVAKSMSSNSVYEAGKRSWLWLKWKQEYSEGMRETFDLVVVGSYYGKGKRKGSFGALLCAVLNEEEQQFETFTKVGTGFTEADAEEINSLLSAHTVSEAPKNVIIKKGMLPDIFIEPAVVIEVLGSEITNSPGHTAGEGEEETGLALRFPRFLRIRYDRAPFDATTVREIRDLKEGI</sequence>
<accession>Q8TSR7</accession>
<keyword id="KW-0067">ATP-binding</keyword>
<keyword id="KW-0131">Cell cycle</keyword>
<keyword id="KW-0132">Cell division</keyword>
<keyword id="KW-0227">DNA damage</keyword>
<keyword id="KW-0233">DNA recombination</keyword>
<keyword id="KW-0234">DNA repair</keyword>
<keyword id="KW-0235">DNA replication</keyword>
<keyword id="KW-0436">Ligase</keyword>
<keyword id="KW-0460">Magnesium</keyword>
<keyword id="KW-0479">Metal-binding</keyword>
<keyword id="KW-0547">Nucleotide-binding</keyword>
<keyword id="KW-1185">Reference proteome</keyword>
<organism>
    <name type="scientific">Methanosarcina acetivorans (strain ATCC 35395 / DSM 2834 / JCM 12185 / C2A)</name>
    <dbReference type="NCBI Taxonomy" id="188937"/>
    <lineage>
        <taxon>Archaea</taxon>
        <taxon>Methanobacteriati</taxon>
        <taxon>Methanobacteriota</taxon>
        <taxon>Stenosarchaea group</taxon>
        <taxon>Methanomicrobia</taxon>
        <taxon>Methanosarcinales</taxon>
        <taxon>Methanosarcinaceae</taxon>
        <taxon>Methanosarcina</taxon>
    </lineage>
</organism>
<gene>
    <name evidence="1" type="primary">lig1</name>
    <name type="ordered locus">MA_0728</name>
</gene>
<feature type="chain" id="PRO_0000365257" description="DNA ligase 1">
    <location>
        <begin position="1"/>
        <end position="580"/>
    </location>
</feature>
<feature type="active site" description="N6-AMP-lysine intermediate" evidence="1">
    <location>
        <position position="247"/>
    </location>
</feature>
<feature type="binding site" evidence="1">
    <location>
        <position position="245"/>
    </location>
    <ligand>
        <name>ATP</name>
        <dbReference type="ChEBI" id="CHEBI:30616"/>
    </ligand>
</feature>
<feature type="binding site" evidence="1">
    <location>
        <position position="252"/>
    </location>
    <ligand>
        <name>ATP</name>
        <dbReference type="ChEBI" id="CHEBI:30616"/>
    </ligand>
</feature>
<feature type="binding site" evidence="1">
    <location>
        <position position="267"/>
    </location>
    <ligand>
        <name>ATP</name>
        <dbReference type="ChEBI" id="CHEBI:30616"/>
    </ligand>
</feature>
<feature type="binding site" evidence="1">
    <location>
        <position position="297"/>
    </location>
    <ligand>
        <name>ATP</name>
        <dbReference type="ChEBI" id="CHEBI:30616"/>
    </ligand>
</feature>
<feature type="binding site" evidence="1">
    <location>
        <position position="343"/>
    </location>
    <ligand>
        <name>ATP</name>
        <dbReference type="ChEBI" id="CHEBI:30616"/>
    </ligand>
</feature>
<feature type="binding site" evidence="1">
    <location>
        <position position="420"/>
    </location>
    <ligand>
        <name>ATP</name>
        <dbReference type="ChEBI" id="CHEBI:30616"/>
    </ligand>
</feature>
<feature type="binding site" evidence="1">
    <location>
        <position position="426"/>
    </location>
    <ligand>
        <name>ATP</name>
        <dbReference type="ChEBI" id="CHEBI:30616"/>
    </ligand>
</feature>
<protein>
    <recommendedName>
        <fullName evidence="1">DNA ligase 1</fullName>
        <ecNumber evidence="1">6.5.1.1</ecNumber>
    </recommendedName>
    <alternativeName>
        <fullName evidence="1">Polydeoxyribonucleotide synthase [ATP] 1</fullName>
    </alternativeName>
</protein>
<name>DNLI1_METAC</name>
<evidence type="ECO:0000255" key="1">
    <source>
        <dbReference type="HAMAP-Rule" id="MF_00407"/>
    </source>
</evidence>